<proteinExistence type="inferred from homology"/>
<protein>
    <recommendedName>
        <fullName evidence="1">DNA-directed RNA polymerase subunit alpha</fullName>
        <shortName evidence="1">RNAP subunit alpha</shortName>
        <ecNumber evidence="1">2.7.7.6</ecNumber>
    </recommendedName>
    <alternativeName>
        <fullName evidence="1">RNA polymerase subunit alpha</fullName>
    </alternativeName>
    <alternativeName>
        <fullName evidence="1">Transcriptase subunit alpha</fullName>
    </alternativeName>
</protein>
<dbReference type="EC" id="2.7.7.6" evidence="1"/>
<dbReference type="EMBL" id="BX248355">
    <property type="protein sequence ID" value="CAE49060.1"/>
    <property type="molecule type" value="Genomic_DNA"/>
</dbReference>
<dbReference type="RefSeq" id="WP_010934373.1">
    <property type="nucleotide sequence ID" value="NC_002935.2"/>
</dbReference>
<dbReference type="SMR" id="Q6NJ63"/>
<dbReference type="STRING" id="257309.DIP0549"/>
<dbReference type="KEGG" id="cdi:DIP0549"/>
<dbReference type="HOGENOM" id="CLU_053084_0_1_11"/>
<dbReference type="Proteomes" id="UP000002198">
    <property type="component" value="Chromosome"/>
</dbReference>
<dbReference type="GO" id="GO:0005737">
    <property type="term" value="C:cytoplasm"/>
    <property type="evidence" value="ECO:0007669"/>
    <property type="project" value="UniProtKB-ARBA"/>
</dbReference>
<dbReference type="GO" id="GO:0000428">
    <property type="term" value="C:DNA-directed RNA polymerase complex"/>
    <property type="evidence" value="ECO:0007669"/>
    <property type="project" value="UniProtKB-KW"/>
</dbReference>
<dbReference type="GO" id="GO:0003677">
    <property type="term" value="F:DNA binding"/>
    <property type="evidence" value="ECO:0007669"/>
    <property type="project" value="UniProtKB-UniRule"/>
</dbReference>
<dbReference type="GO" id="GO:0003899">
    <property type="term" value="F:DNA-directed RNA polymerase activity"/>
    <property type="evidence" value="ECO:0007669"/>
    <property type="project" value="UniProtKB-UniRule"/>
</dbReference>
<dbReference type="GO" id="GO:0046983">
    <property type="term" value="F:protein dimerization activity"/>
    <property type="evidence" value="ECO:0007669"/>
    <property type="project" value="InterPro"/>
</dbReference>
<dbReference type="GO" id="GO:0006351">
    <property type="term" value="P:DNA-templated transcription"/>
    <property type="evidence" value="ECO:0007669"/>
    <property type="project" value="UniProtKB-UniRule"/>
</dbReference>
<dbReference type="CDD" id="cd06928">
    <property type="entry name" value="RNAP_alpha_NTD"/>
    <property type="match status" value="1"/>
</dbReference>
<dbReference type="FunFam" id="1.10.150.20:FF:000001">
    <property type="entry name" value="DNA-directed RNA polymerase subunit alpha"/>
    <property type="match status" value="1"/>
</dbReference>
<dbReference type="FunFam" id="2.170.120.12:FF:000001">
    <property type="entry name" value="DNA-directed RNA polymerase subunit alpha"/>
    <property type="match status" value="1"/>
</dbReference>
<dbReference type="Gene3D" id="1.10.150.20">
    <property type="entry name" value="5' to 3' exonuclease, C-terminal subdomain"/>
    <property type="match status" value="1"/>
</dbReference>
<dbReference type="Gene3D" id="2.170.120.12">
    <property type="entry name" value="DNA-directed RNA polymerase, insert domain"/>
    <property type="match status" value="1"/>
</dbReference>
<dbReference type="Gene3D" id="3.30.1360.10">
    <property type="entry name" value="RNA polymerase, RBP11-like subunit"/>
    <property type="match status" value="1"/>
</dbReference>
<dbReference type="HAMAP" id="MF_00059">
    <property type="entry name" value="RNApol_bact_RpoA"/>
    <property type="match status" value="1"/>
</dbReference>
<dbReference type="InterPro" id="IPR011262">
    <property type="entry name" value="DNA-dir_RNA_pol_insert"/>
</dbReference>
<dbReference type="InterPro" id="IPR011263">
    <property type="entry name" value="DNA-dir_RNA_pol_RpoA/D/Rpb3"/>
</dbReference>
<dbReference type="InterPro" id="IPR011773">
    <property type="entry name" value="DNA-dir_RpoA"/>
</dbReference>
<dbReference type="InterPro" id="IPR036603">
    <property type="entry name" value="RBP11-like"/>
</dbReference>
<dbReference type="InterPro" id="IPR011260">
    <property type="entry name" value="RNAP_asu_C"/>
</dbReference>
<dbReference type="InterPro" id="IPR036643">
    <property type="entry name" value="RNApol_insert_sf"/>
</dbReference>
<dbReference type="NCBIfam" id="NF003513">
    <property type="entry name" value="PRK05182.1-2"/>
    <property type="match status" value="1"/>
</dbReference>
<dbReference type="NCBIfam" id="NF003514">
    <property type="entry name" value="PRK05182.1-4"/>
    <property type="match status" value="1"/>
</dbReference>
<dbReference type="NCBIfam" id="NF003519">
    <property type="entry name" value="PRK05182.2-5"/>
    <property type="match status" value="1"/>
</dbReference>
<dbReference type="NCBIfam" id="TIGR02027">
    <property type="entry name" value="rpoA"/>
    <property type="match status" value="1"/>
</dbReference>
<dbReference type="Pfam" id="PF01000">
    <property type="entry name" value="RNA_pol_A_bac"/>
    <property type="match status" value="1"/>
</dbReference>
<dbReference type="Pfam" id="PF03118">
    <property type="entry name" value="RNA_pol_A_CTD"/>
    <property type="match status" value="1"/>
</dbReference>
<dbReference type="Pfam" id="PF01193">
    <property type="entry name" value="RNA_pol_L"/>
    <property type="match status" value="1"/>
</dbReference>
<dbReference type="SMART" id="SM00662">
    <property type="entry name" value="RPOLD"/>
    <property type="match status" value="1"/>
</dbReference>
<dbReference type="SUPFAM" id="SSF47789">
    <property type="entry name" value="C-terminal domain of RNA polymerase alpha subunit"/>
    <property type="match status" value="1"/>
</dbReference>
<dbReference type="SUPFAM" id="SSF56553">
    <property type="entry name" value="Insert subdomain of RNA polymerase alpha subunit"/>
    <property type="match status" value="1"/>
</dbReference>
<dbReference type="SUPFAM" id="SSF55257">
    <property type="entry name" value="RBP11-like subunits of RNA polymerase"/>
    <property type="match status" value="1"/>
</dbReference>
<gene>
    <name evidence="1" type="primary">rpoA</name>
    <name type="ordered locus">DIP0549</name>
</gene>
<comment type="function">
    <text evidence="1">DNA-dependent RNA polymerase catalyzes the transcription of DNA into RNA using the four ribonucleoside triphosphates as substrates.</text>
</comment>
<comment type="catalytic activity">
    <reaction evidence="1">
        <text>RNA(n) + a ribonucleoside 5'-triphosphate = RNA(n+1) + diphosphate</text>
        <dbReference type="Rhea" id="RHEA:21248"/>
        <dbReference type="Rhea" id="RHEA-COMP:14527"/>
        <dbReference type="Rhea" id="RHEA-COMP:17342"/>
        <dbReference type="ChEBI" id="CHEBI:33019"/>
        <dbReference type="ChEBI" id="CHEBI:61557"/>
        <dbReference type="ChEBI" id="CHEBI:140395"/>
        <dbReference type="EC" id="2.7.7.6"/>
    </reaction>
</comment>
<comment type="subunit">
    <text evidence="1">Homodimer. The RNAP catalytic core consists of 2 alpha, 1 beta, 1 beta' and 1 omega subunit. When a sigma factor is associated with the core the holoenzyme is formed, which can initiate transcription.</text>
</comment>
<comment type="domain">
    <text evidence="1">The N-terminal domain is essential for RNAP assembly and basal transcription, whereas the C-terminal domain is involved in interaction with transcriptional regulators and with upstream promoter elements.</text>
</comment>
<comment type="similarity">
    <text evidence="1">Belongs to the RNA polymerase alpha chain family.</text>
</comment>
<accession>Q6NJ63</accession>
<organism>
    <name type="scientific">Corynebacterium diphtheriae (strain ATCC 700971 / NCTC 13129 / Biotype gravis)</name>
    <dbReference type="NCBI Taxonomy" id="257309"/>
    <lineage>
        <taxon>Bacteria</taxon>
        <taxon>Bacillati</taxon>
        <taxon>Actinomycetota</taxon>
        <taxon>Actinomycetes</taxon>
        <taxon>Mycobacteriales</taxon>
        <taxon>Corynebacteriaceae</taxon>
        <taxon>Corynebacterium</taxon>
    </lineage>
</organism>
<reference key="1">
    <citation type="journal article" date="2003" name="Nucleic Acids Res.">
        <title>The complete genome sequence and analysis of Corynebacterium diphtheriae NCTC13129.</title>
        <authorList>
            <person name="Cerdeno-Tarraga A.-M."/>
            <person name="Efstratiou A."/>
            <person name="Dover L.G."/>
            <person name="Holden M.T.G."/>
            <person name="Pallen M.J."/>
            <person name="Bentley S.D."/>
            <person name="Besra G.S."/>
            <person name="Churcher C.M."/>
            <person name="James K.D."/>
            <person name="De Zoysa A."/>
            <person name="Chillingworth T."/>
            <person name="Cronin A."/>
            <person name="Dowd L."/>
            <person name="Feltwell T."/>
            <person name="Hamlin N."/>
            <person name="Holroyd S."/>
            <person name="Jagels K."/>
            <person name="Moule S."/>
            <person name="Quail M.A."/>
            <person name="Rabbinowitsch E."/>
            <person name="Rutherford K.M."/>
            <person name="Thomson N.R."/>
            <person name="Unwin L."/>
            <person name="Whitehead S."/>
            <person name="Barrell B.G."/>
            <person name="Parkhill J."/>
        </authorList>
    </citation>
    <scope>NUCLEOTIDE SEQUENCE [LARGE SCALE GENOMIC DNA]</scope>
    <source>
        <strain>ATCC 700971 / NCTC 13129 / Biotype gravis</strain>
    </source>
</reference>
<name>RPOA_CORDI</name>
<keyword id="KW-0240">DNA-directed RNA polymerase</keyword>
<keyword id="KW-0548">Nucleotidyltransferase</keyword>
<keyword id="KW-1185">Reference proteome</keyword>
<keyword id="KW-0804">Transcription</keyword>
<keyword id="KW-0808">Transferase</keyword>
<sequence length="338" mass="36974">MLISQRPTLTEEYVDSARSRFVIEPLEPGFGYTLGNSLRRTLLSSIPGAAVTSIKIDGVLHEFTTINGVKEDVSDIILNIKGLVLSSDSDEPVVMYLRKEGAGVITAGDIEPPAGVEIHNPDLHLATLNEQGRLDIEMIVERGRGYVPATLYSGPAEIGRIPVDQIYSPVLKVSYKVEATRVEQRTDFDKLIIDVETKNSMAPRDALASAGKTLVELFGLARELNTAAEGIEIGPSPQETEYIAAYGMPIEDLNFSVRSYNCLKRQEIHTVGELAECTESDLLDIRNFGQKSINEVKIKLAGLGLTLKDAPEDFDPTQLDGYDAATGDYIDTDPEETE</sequence>
<feature type="chain" id="PRO_0000175297" description="DNA-directed RNA polymerase subunit alpha">
    <location>
        <begin position="1"/>
        <end position="338"/>
    </location>
</feature>
<feature type="region of interest" description="Alpha N-terminal domain (alpha-NTD)" evidence="1">
    <location>
        <begin position="1"/>
        <end position="225"/>
    </location>
</feature>
<feature type="region of interest" description="Alpha C-terminal domain (alpha-CTD)" evidence="1">
    <location>
        <begin position="242"/>
        <end position="338"/>
    </location>
</feature>
<feature type="region of interest" description="Disordered" evidence="2">
    <location>
        <begin position="314"/>
        <end position="338"/>
    </location>
</feature>
<evidence type="ECO:0000255" key="1">
    <source>
        <dbReference type="HAMAP-Rule" id="MF_00059"/>
    </source>
</evidence>
<evidence type="ECO:0000256" key="2">
    <source>
        <dbReference type="SAM" id="MobiDB-lite"/>
    </source>
</evidence>